<reference key="1">
    <citation type="submission" date="2004-12" db="EMBL/GenBank/DDBJ databases">
        <authorList>
            <consortium name="NIH - Xenopus Gene Collection (XGC) project"/>
        </authorList>
    </citation>
    <scope>NUCLEOTIDE SEQUENCE [LARGE SCALE MRNA]</scope>
    <source>
        <tissue>Testis</tissue>
    </source>
</reference>
<proteinExistence type="evidence at transcript level"/>
<dbReference type="EMBL" id="BC087443">
    <property type="protein sequence ID" value="AAH87443.1"/>
    <property type="molecule type" value="mRNA"/>
</dbReference>
<dbReference type="RefSeq" id="NP_001088780.1">
    <property type="nucleotide sequence ID" value="NM_001095311.1"/>
</dbReference>
<dbReference type="RefSeq" id="XP_018096332.1">
    <property type="nucleotide sequence ID" value="XM_018240843.1"/>
</dbReference>
<dbReference type="RefSeq" id="XP_018096333.1">
    <property type="nucleotide sequence ID" value="XM_018240844.1"/>
</dbReference>
<dbReference type="SMR" id="Q5PPY2"/>
<dbReference type="DNASU" id="496045"/>
<dbReference type="GeneID" id="496045"/>
<dbReference type="KEGG" id="xla:496045"/>
<dbReference type="AGR" id="Xenbase:XB-GENE-940512"/>
<dbReference type="CTD" id="496045"/>
<dbReference type="Xenbase" id="XB-GENE-940512">
    <property type="gene designation" value="borcs5.L"/>
</dbReference>
<dbReference type="OrthoDB" id="10035640at2759"/>
<dbReference type="Proteomes" id="UP000186698">
    <property type="component" value="Chromosome 3L"/>
</dbReference>
<dbReference type="Bgee" id="496045">
    <property type="expression patterns" value="Expressed in brain and 20 other cell types or tissues"/>
</dbReference>
<dbReference type="GO" id="GO:0099078">
    <property type="term" value="C:BORC complex"/>
    <property type="evidence" value="ECO:0000250"/>
    <property type="project" value="UniProtKB"/>
</dbReference>
<dbReference type="GO" id="GO:0098574">
    <property type="term" value="C:cytoplasmic side of lysosomal membrane"/>
    <property type="evidence" value="ECO:0000250"/>
    <property type="project" value="UniProtKB"/>
</dbReference>
<dbReference type="GO" id="GO:0016020">
    <property type="term" value="C:membrane"/>
    <property type="evidence" value="ECO:0000250"/>
    <property type="project" value="UniProtKB"/>
</dbReference>
<dbReference type="GO" id="GO:0030672">
    <property type="term" value="C:synaptic vesicle membrane"/>
    <property type="evidence" value="ECO:0000318"/>
    <property type="project" value="GO_Central"/>
</dbReference>
<dbReference type="GO" id="GO:0032418">
    <property type="term" value="P:lysosome localization"/>
    <property type="evidence" value="ECO:0000250"/>
    <property type="project" value="UniProtKB"/>
</dbReference>
<dbReference type="GO" id="GO:0072384">
    <property type="term" value="P:organelle transport along microtubule"/>
    <property type="evidence" value="ECO:0000250"/>
    <property type="project" value="UniProtKB"/>
</dbReference>
<dbReference type="GO" id="GO:1903744">
    <property type="term" value="P:positive regulation of anterograde synaptic vesicle transport"/>
    <property type="evidence" value="ECO:0000318"/>
    <property type="project" value="GO_Central"/>
</dbReference>
<dbReference type="CDD" id="cd22789">
    <property type="entry name" value="BORCS5-like"/>
    <property type="match status" value="1"/>
</dbReference>
<dbReference type="InterPro" id="IPR018780">
    <property type="entry name" value="TBORCS5"/>
</dbReference>
<dbReference type="PANTHER" id="PTHR31634">
    <property type="entry name" value="BLOC-1-RELATED COMPLEX SUBUNIT 5"/>
    <property type="match status" value="1"/>
</dbReference>
<dbReference type="PANTHER" id="PTHR31634:SF2">
    <property type="entry name" value="BLOC-1-RELATED COMPLEX SUBUNIT 5"/>
    <property type="match status" value="1"/>
</dbReference>
<dbReference type="Pfam" id="PF10158">
    <property type="entry name" value="LOH1CR12"/>
    <property type="match status" value="1"/>
</dbReference>
<gene>
    <name evidence="1" type="primary">borcs5</name>
</gene>
<evidence type="ECO:0000250" key="1">
    <source>
        <dbReference type="UniProtKB" id="Q969J3"/>
    </source>
</evidence>
<evidence type="ECO:0000256" key="2">
    <source>
        <dbReference type="SAM" id="MobiDB-lite"/>
    </source>
</evidence>
<evidence type="ECO:0000305" key="3"/>
<accession>Q5PPY2</accession>
<name>BORC5_XENLA</name>
<protein>
    <recommendedName>
        <fullName evidence="3">BLOC-1-related complex subunit 5</fullName>
    </recommendedName>
</protein>
<organism>
    <name type="scientific">Xenopus laevis</name>
    <name type="common">African clawed frog</name>
    <dbReference type="NCBI Taxonomy" id="8355"/>
    <lineage>
        <taxon>Eukaryota</taxon>
        <taxon>Metazoa</taxon>
        <taxon>Chordata</taxon>
        <taxon>Craniata</taxon>
        <taxon>Vertebrata</taxon>
        <taxon>Euteleostomi</taxon>
        <taxon>Amphibia</taxon>
        <taxon>Batrachia</taxon>
        <taxon>Anura</taxon>
        <taxon>Pipoidea</taxon>
        <taxon>Pipidae</taxon>
        <taxon>Xenopodinae</taxon>
        <taxon>Xenopus</taxon>
        <taxon>Xenopus</taxon>
    </lineage>
</organism>
<comment type="function">
    <text evidence="1">As part of a BORC-like complex may play a role in lysosomes movement and localization at the cell periphery. Associated with the cytosolic face of lysosomes, this complex may couple lysosomes to microtubule plus-end-directed kinesin motor.</text>
</comment>
<comment type="subcellular location">
    <subcellularLocation>
        <location evidence="1">Lysosome membrane</location>
        <topology evidence="1">Lipid-anchor</topology>
        <orientation evidence="1">Cytoplasmic side</orientation>
    </subcellularLocation>
</comment>
<comment type="similarity">
    <text evidence="3">Belongs to the BORCS5 family.</text>
</comment>
<feature type="chain" id="PRO_0000318600" description="BLOC-1-related complex subunit 5">
    <location>
        <begin position="1"/>
        <end position="196"/>
    </location>
</feature>
<feature type="region of interest" description="Disordered" evidence="2">
    <location>
        <begin position="1"/>
        <end position="32"/>
    </location>
</feature>
<sequence>MGAEQSSEGDLRQNDVSSSASPSPAKQKAKMDDIVVVAPGTQSLRNVSKDPEVIKLQEIPTFQPLLKGLLSGQTSPTNVRLERLDSPQVLQLCVRYQEHLHQCAEAVSFDQNALVKRIKEMDSSVDGLYSLMQERQKRFAKYAEQIQKVNEMSAILRRIQMGIDQTVPLMEKLNIMLPEGERLEPFCMSPDRESKP</sequence>
<keyword id="KW-0449">Lipoprotein</keyword>
<keyword id="KW-0458">Lysosome</keyword>
<keyword id="KW-0472">Membrane</keyword>
<keyword id="KW-1185">Reference proteome</keyword>